<dbReference type="EMBL" id="FJ611918">
    <property type="protein sequence ID" value="ACO50423.1"/>
    <property type="molecule type" value="mRNA"/>
</dbReference>
<dbReference type="EMBL" id="AC010155">
    <property type="protein sequence ID" value="AAF16751.1"/>
    <property type="molecule type" value="Genomic_DNA"/>
</dbReference>
<dbReference type="EMBL" id="CP002684">
    <property type="protein sequence ID" value="AEE30981.1"/>
    <property type="molecule type" value="Genomic_DNA"/>
</dbReference>
<dbReference type="EMBL" id="AF325030">
    <property type="protein sequence ID" value="AAG40382.1"/>
    <property type="molecule type" value="mRNA"/>
</dbReference>
<dbReference type="EMBL" id="AK229369">
    <property type="protein sequence ID" value="BAF01232.1"/>
    <property type="molecule type" value="mRNA"/>
</dbReference>
<dbReference type="EMBL" id="BT029336">
    <property type="protein sequence ID" value="ABK32150.1"/>
    <property type="molecule type" value="mRNA"/>
</dbReference>
<dbReference type="PIR" id="H86410">
    <property type="entry name" value="H86410"/>
</dbReference>
<dbReference type="RefSeq" id="NP_174170.1">
    <property type="nucleotide sequence ID" value="NM_102616.2"/>
</dbReference>
<dbReference type="SMR" id="Q9SGP6"/>
<dbReference type="BioGRID" id="24983">
    <property type="interactions" value="8"/>
</dbReference>
<dbReference type="FunCoup" id="Q9SGP6">
    <property type="interactions" value="46"/>
</dbReference>
<dbReference type="IntAct" id="Q9SGP6">
    <property type="interactions" value="12"/>
</dbReference>
<dbReference type="STRING" id="3702.Q9SGP6"/>
<dbReference type="PaxDb" id="3702-AT1G28480.1"/>
<dbReference type="EnsemblPlants" id="AT1G28480.1">
    <property type="protein sequence ID" value="AT1G28480.1"/>
    <property type="gene ID" value="AT1G28480"/>
</dbReference>
<dbReference type="GeneID" id="839748"/>
<dbReference type="Gramene" id="AT1G28480.1">
    <property type="protein sequence ID" value="AT1G28480.1"/>
    <property type="gene ID" value="AT1G28480"/>
</dbReference>
<dbReference type="KEGG" id="ath:AT1G28480"/>
<dbReference type="Araport" id="AT1G28480"/>
<dbReference type="TAIR" id="AT1G28480">
    <property type="gene designation" value="GRX480"/>
</dbReference>
<dbReference type="eggNOG" id="KOG1752">
    <property type="taxonomic scope" value="Eukaryota"/>
</dbReference>
<dbReference type="HOGENOM" id="CLU_026126_6_2_1"/>
<dbReference type="InParanoid" id="Q9SGP6"/>
<dbReference type="OMA" id="MVWENAV"/>
<dbReference type="OrthoDB" id="418495at2759"/>
<dbReference type="PhylomeDB" id="Q9SGP6"/>
<dbReference type="PRO" id="PR:Q9SGP6"/>
<dbReference type="Proteomes" id="UP000006548">
    <property type="component" value="Chromosome 1"/>
</dbReference>
<dbReference type="ExpressionAtlas" id="Q9SGP6">
    <property type="expression patterns" value="baseline and differential"/>
</dbReference>
<dbReference type="GO" id="GO:0005737">
    <property type="term" value="C:cytoplasm"/>
    <property type="evidence" value="ECO:0007669"/>
    <property type="project" value="UniProtKB-SubCell"/>
</dbReference>
<dbReference type="GO" id="GO:0005634">
    <property type="term" value="C:nucleus"/>
    <property type="evidence" value="ECO:0007669"/>
    <property type="project" value="UniProtKB-SubCell"/>
</dbReference>
<dbReference type="GO" id="GO:0009867">
    <property type="term" value="P:jasmonic acid mediated signaling pathway"/>
    <property type="evidence" value="ECO:0000315"/>
    <property type="project" value="TAIR"/>
</dbReference>
<dbReference type="GO" id="GO:0000122">
    <property type="term" value="P:negative regulation of transcription by RNA polymerase II"/>
    <property type="evidence" value="ECO:0000314"/>
    <property type="project" value="TAIR"/>
</dbReference>
<dbReference type="GO" id="GO:0009751">
    <property type="term" value="P:response to salicylic acid"/>
    <property type="evidence" value="ECO:0000270"/>
    <property type="project" value="TAIR"/>
</dbReference>
<dbReference type="GO" id="GO:0009863">
    <property type="term" value="P:salicylic acid mediated signaling pathway"/>
    <property type="evidence" value="ECO:0000315"/>
    <property type="project" value="TAIR"/>
</dbReference>
<dbReference type="CDD" id="cd03419">
    <property type="entry name" value="GRX_GRXh_1_2_like"/>
    <property type="match status" value="1"/>
</dbReference>
<dbReference type="FunFam" id="3.40.30.10:FF:000484">
    <property type="entry name" value="GRXS13"/>
    <property type="match status" value="1"/>
</dbReference>
<dbReference type="Gene3D" id="3.40.30.10">
    <property type="entry name" value="Glutaredoxin"/>
    <property type="match status" value="1"/>
</dbReference>
<dbReference type="InterPro" id="IPR011905">
    <property type="entry name" value="GlrX-like_pln_2"/>
</dbReference>
<dbReference type="InterPro" id="IPR002109">
    <property type="entry name" value="Glutaredoxin"/>
</dbReference>
<dbReference type="InterPro" id="IPR036249">
    <property type="entry name" value="Thioredoxin-like_sf"/>
</dbReference>
<dbReference type="NCBIfam" id="TIGR02189">
    <property type="entry name" value="GlrX-like_plant"/>
    <property type="match status" value="1"/>
</dbReference>
<dbReference type="PANTHER" id="PTHR10168">
    <property type="entry name" value="GLUTAREDOXIN"/>
    <property type="match status" value="1"/>
</dbReference>
<dbReference type="Pfam" id="PF00462">
    <property type="entry name" value="Glutaredoxin"/>
    <property type="match status" value="1"/>
</dbReference>
<dbReference type="SUPFAM" id="SSF52833">
    <property type="entry name" value="Thioredoxin-like"/>
    <property type="match status" value="1"/>
</dbReference>
<dbReference type="PROSITE" id="PS51354">
    <property type="entry name" value="GLUTAREDOXIN_2"/>
    <property type="match status" value="1"/>
</dbReference>
<evidence type="ECO:0000250" key="1"/>
<evidence type="ECO:0000255" key="2">
    <source>
        <dbReference type="PROSITE-ProRule" id="PRU00686"/>
    </source>
</evidence>
<evidence type="ECO:0000269" key="3">
    <source>
    </source>
</evidence>
<evidence type="ECO:0000305" key="4"/>
<reference key="1">
    <citation type="journal article" date="2007" name="Plant J.">
        <title>SA-inducible Arabidopsis glutaredoxin interacts with TGA factors and suppresses JA-responsive PDF1.2 transcription.</title>
        <authorList>
            <person name="Ndamukong I."/>
            <person name="Abdallat A.A."/>
            <person name="Thurow C."/>
            <person name="Fode B."/>
            <person name="Zander M."/>
            <person name="Weigel R."/>
            <person name="Gatz C."/>
        </authorList>
    </citation>
    <scope>NUCLEOTIDE SEQUENCE [GENOMIC DNA]</scope>
    <scope>INDUCTION</scope>
    <scope>INTERACTION WITH TGA2 AND TGA6</scope>
</reference>
<reference key="2">
    <citation type="journal article" date="2009" name="Plant Cell">
        <title>Nuclear activity of ROXY1, a glutaredoxin interacting with TGA factors, is required for petal development in Arabidopsis thaliana.</title>
        <authorList>
            <person name="Li S."/>
            <person name="Lauri A."/>
            <person name="Ziemann M."/>
            <person name="Busch A."/>
            <person name="Bhave M."/>
            <person name="Zachgo S."/>
        </authorList>
    </citation>
    <scope>NUCLEOTIDE SEQUENCE [MRNA]</scope>
    <scope>GENE FAMILY</scope>
</reference>
<reference key="3">
    <citation type="journal article" date="2000" name="Nature">
        <title>Sequence and analysis of chromosome 1 of the plant Arabidopsis thaliana.</title>
        <authorList>
            <person name="Theologis A."/>
            <person name="Ecker J.R."/>
            <person name="Palm C.J."/>
            <person name="Federspiel N.A."/>
            <person name="Kaul S."/>
            <person name="White O."/>
            <person name="Alonso J."/>
            <person name="Altafi H."/>
            <person name="Araujo R."/>
            <person name="Bowman C.L."/>
            <person name="Brooks S.Y."/>
            <person name="Buehler E."/>
            <person name="Chan A."/>
            <person name="Chao Q."/>
            <person name="Chen H."/>
            <person name="Cheuk R.F."/>
            <person name="Chin C.W."/>
            <person name="Chung M.K."/>
            <person name="Conn L."/>
            <person name="Conway A.B."/>
            <person name="Conway A.R."/>
            <person name="Creasy T.H."/>
            <person name="Dewar K."/>
            <person name="Dunn P."/>
            <person name="Etgu P."/>
            <person name="Feldblyum T.V."/>
            <person name="Feng J.-D."/>
            <person name="Fong B."/>
            <person name="Fujii C.Y."/>
            <person name="Gill J.E."/>
            <person name="Goldsmith A.D."/>
            <person name="Haas B."/>
            <person name="Hansen N.F."/>
            <person name="Hughes B."/>
            <person name="Huizar L."/>
            <person name="Hunter J.L."/>
            <person name="Jenkins J."/>
            <person name="Johnson-Hopson C."/>
            <person name="Khan S."/>
            <person name="Khaykin E."/>
            <person name="Kim C.J."/>
            <person name="Koo H.L."/>
            <person name="Kremenetskaia I."/>
            <person name="Kurtz D.B."/>
            <person name="Kwan A."/>
            <person name="Lam B."/>
            <person name="Langin-Hooper S."/>
            <person name="Lee A."/>
            <person name="Lee J.M."/>
            <person name="Lenz C.A."/>
            <person name="Li J.H."/>
            <person name="Li Y.-P."/>
            <person name="Lin X."/>
            <person name="Liu S.X."/>
            <person name="Liu Z.A."/>
            <person name="Luros J.S."/>
            <person name="Maiti R."/>
            <person name="Marziali A."/>
            <person name="Militscher J."/>
            <person name="Miranda M."/>
            <person name="Nguyen M."/>
            <person name="Nierman W.C."/>
            <person name="Osborne B.I."/>
            <person name="Pai G."/>
            <person name="Peterson J."/>
            <person name="Pham P.K."/>
            <person name="Rizzo M."/>
            <person name="Rooney T."/>
            <person name="Rowley D."/>
            <person name="Sakano H."/>
            <person name="Salzberg S.L."/>
            <person name="Schwartz J.R."/>
            <person name="Shinn P."/>
            <person name="Southwick A.M."/>
            <person name="Sun H."/>
            <person name="Tallon L.J."/>
            <person name="Tambunga G."/>
            <person name="Toriumi M.J."/>
            <person name="Town C.D."/>
            <person name="Utterback T."/>
            <person name="Van Aken S."/>
            <person name="Vaysberg M."/>
            <person name="Vysotskaia V.S."/>
            <person name="Walker M."/>
            <person name="Wu D."/>
            <person name="Yu G."/>
            <person name="Fraser C.M."/>
            <person name="Venter J.C."/>
            <person name="Davis R.W."/>
        </authorList>
    </citation>
    <scope>NUCLEOTIDE SEQUENCE [LARGE SCALE GENOMIC DNA]</scope>
    <source>
        <strain>cv. Columbia</strain>
    </source>
</reference>
<reference key="4">
    <citation type="journal article" date="2017" name="Plant J.">
        <title>Araport11: a complete reannotation of the Arabidopsis thaliana reference genome.</title>
        <authorList>
            <person name="Cheng C.Y."/>
            <person name="Krishnakumar V."/>
            <person name="Chan A.P."/>
            <person name="Thibaud-Nissen F."/>
            <person name="Schobel S."/>
            <person name="Town C.D."/>
        </authorList>
    </citation>
    <scope>GENOME REANNOTATION</scope>
    <source>
        <strain>cv. Columbia</strain>
    </source>
</reference>
<reference key="5">
    <citation type="journal article" date="2003" name="Science">
        <title>Empirical analysis of transcriptional activity in the Arabidopsis genome.</title>
        <authorList>
            <person name="Yamada K."/>
            <person name="Lim J."/>
            <person name="Dale J.M."/>
            <person name="Chen H."/>
            <person name="Shinn P."/>
            <person name="Palm C.J."/>
            <person name="Southwick A.M."/>
            <person name="Wu H.C."/>
            <person name="Kim C.J."/>
            <person name="Nguyen M."/>
            <person name="Pham P.K."/>
            <person name="Cheuk R.F."/>
            <person name="Karlin-Newmann G."/>
            <person name="Liu S.X."/>
            <person name="Lam B."/>
            <person name="Sakano H."/>
            <person name="Wu T."/>
            <person name="Yu G."/>
            <person name="Miranda M."/>
            <person name="Quach H.L."/>
            <person name="Tripp M."/>
            <person name="Chang C.H."/>
            <person name="Lee J.M."/>
            <person name="Toriumi M.J."/>
            <person name="Chan M.M."/>
            <person name="Tang C.C."/>
            <person name="Onodera C.S."/>
            <person name="Deng J.M."/>
            <person name="Akiyama K."/>
            <person name="Ansari Y."/>
            <person name="Arakawa T."/>
            <person name="Banh J."/>
            <person name="Banno F."/>
            <person name="Bowser L."/>
            <person name="Brooks S.Y."/>
            <person name="Carninci P."/>
            <person name="Chao Q."/>
            <person name="Choy N."/>
            <person name="Enju A."/>
            <person name="Goldsmith A.D."/>
            <person name="Gurjal M."/>
            <person name="Hansen N.F."/>
            <person name="Hayashizaki Y."/>
            <person name="Johnson-Hopson C."/>
            <person name="Hsuan V.W."/>
            <person name="Iida K."/>
            <person name="Karnes M."/>
            <person name="Khan S."/>
            <person name="Koesema E."/>
            <person name="Ishida J."/>
            <person name="Jiang P.X."/>
            <person name="Jones T."/>
            <person name="Kawai J."/>
            <person name="Kamiya A."/>
            <person name="Meyers C."/>
            <person name="Nakajima M."/>
            <person name="Narusaka M."/>
            <person name="Seki M."/>
            <person name="Sakurai T."/>
            <person name="Satou M."/>
            <person name="Tamse R."/>
            <person name="Vaysberg M."/>
            <person name="Wallender E.K."/>
            <person name="Wong C."/>
            <person name="Yamamura Y."/>
            <person name="Yuan S."/>
            <person name="Shinozaki K."/>
            <person name="Davis R.W."/>
            <person name="Theologis A."/>
            <person name="Ecker J.R."/>
        </authorList>
    </citation>
    <scope>NUCLEOTIDE SEQUENCE [LARGE SCALE MRNA]</scope>
    <source>
        <strain>cv. Columbia</strain>
    </source>
</reference>
<reference key="6">
    <citation type="submission" date="2006-07" db="EMBL/GenBank/DDBJ databases">
        <title>Large-scale analysis of RIKEN Arabidopsis full-length (RAFL) cDNAs.</title>
        <authorList>
            <person name="Totoki Y."/>
            <person name="Seki M."/>
            <person name="Ishida J."/>
            <person name="Nakajima M."/>
            <person name="Enju A."/>
            <person name="Kamiya A."/>
            <person name="Narusaka M."/>
            <person name="Shin-i T."/>
            <person name="Nakagawa M."/>
            <person name="Sakamoto N."/>
            <person name="Oishi K."/>
            <person name="Kohara Y."/>
            <person name="Kobayashi M."/>
            <person name="Toyoda A."/>
            <person name="Sakaki Y."/>
            <person name="Sakurai T."/>
            <person name="Iida K."/>
            <person name="Akiyama K."/>
            <person name="Satou M."/>
            <person name="Toyoda T."/>
            <person name="Konagaya A."/>
            <person name="Carninci P."/>
            <person name="Kawai J."/>
            <person name="Hayashizaki Y."/>
            <person name="Shinozaki K."/>
        </authorList>
    </citation>
    <scope>NUCLEOTIDE SEQUENCE [LARGE SCALE MRNA]</scope>
    <source>
        <strain>cv. Columbia</strain>
    </source>
</reference>
<reference key="7">
    <citation type="submission" date="2006-11" db="EMBL/GenBank/DDBJ databases">
        <title>Arabidopsis ORF clones.</title>
        <authorList>
            <person name="Bautista V.R."/>
            <person name="Kim C.J."/>
            <person name="Chen H."/>
            <person name="Quinitio C."/>
            <person name="Ecker J.R."/>
        </authorList>
    </citation>
    <scope>NUCLEOTIDE SEQUENCE [LARGE SCALE MRNA]</scope>
    <source>
        <strain>cv. Columbia</strain>
    </source>
</reference>
<reference key="8">
    <citation type="journal article" date="2004" name="Cell. Mol. Life Sci.">
        <title>Plant glutaredoxins: still mysterious reducing systems.</title>
        <authorList>
            <person name="Rouhier N."/>
            <person name="Gelhaye E."/>
            <person name="Jacquot J.-P."/>
        </authorList>
    </citation>
    <scope>GENE FAMILY</scope>
    <scope>NOMENCLATURE</scope>
</reference>
<reference key="9">
    <citation type="journal article" date="2006" name="J. Exp. Bot.">
        <title>Genome-wide analysis of plant glutaredoxin systems.</title>
        <authorList>
            <person name="Rouhier N."/>
            <person name="Couturier J."/>
            <person name="Jacquot J.-P."/>
        </authorList>
    </citation>
    <scope>GENE FAMILY</scope>
</reference>
<accession>Q9SGP6</accession>
<accession>C1JGQ9</accession>
<keyword id="KW-0963">Cytoplasm</keyword>
<keyword id="KW-1015">Disulfide bond</keyword>
<keyword id="KW-0249">Electron transport</keyword>
<keyword id="KW-0539">Nucleus</keyword>
<keyword id="KW-0676">Redox-active center</keyword>
<keyword id="KW-1185">Reference proteome</keyword>
<keyword id="KW-0813">Transport</keyword>
<sequence>MQGTISCARNYNMTTTVGESLRPLSLKTQGNGERVRMVVEENAVIVIGRRGCCMCHVVRRLLLGLGVNPAVLEIDEEREDEVLSELENIGVQGGGGTVKLPAVYVGGRLFGGLDRVMATHISGELVPILKEVGALWL</sequence>
<comment type="function">
    <text evidence="1">Has a glutathione-disulfide oxidoreductase activity in the presence of NADPH and glutathione reductase. Reduces low molecular weight disulfides and proteins (By similarity).</text>
</comment>
<comment type="subunit">
    <text evidence="3">Interacts with TGA2 and TGA6.</text>
</comment>
<comment type="interaction">
    <interactant intactId="EBI-1545762">
        <id>Q9SGP6</id>
    </interactant>
    <interactant intactId="EBI-541307">
        <id>P43273</id>
        <label>TGA2</label>
    </interactant>
    <organismsDiffer>false</organismsDiffer>
    <experiments>6</experiments>
</comment>
<comment type="interaction">
    <interactant intactId="EBI-1545762">
        <id>Q9SGP6</id>
    </interactant>
    <interactant intactId="EBI-541366">
        <id>Q39234</id>
        <label>TGA3</label>
    </interactant>
    <organismsDiffer>false</organismsDiffer>
    <experiments>3</experiments>
</comment>
<comment type="interaction">
    <interactant intactId="EBI-1545762">
        <id>Q9SGP6</id>
    </interactant>
    <interactant intactId="EBI-541321">
        <id>Q39140</id>
        <label>TGA6</label>
    </interactant>
    <organismsDiffer>false</organismsDiffer>
    <experiments>4</experiments>
</comment>
<comment type="interaction">
    <interactant intactId="EBI-1545762">
        <id>Q9SGP6</id>
    </interactant>
    <interactant intactId="EBI-4426557">
        <id>Q84MB2</id>
        <label>TIFY8</label>
    </interactant>
    <organismsDiffer>false</organismsDiffer>
    <experiments>3</experiments>
</comment>
<comment type="interaction">
    <interactant intactId="EBI-1545762">
        <id>Q9SGP6</id>
    </interactant>
    <interactant intactId="EBI-1545751">
        <id>Q9SQK1</id>
        <label>TGA2.2</label>
    </interactant>
    <organismsDiffer>true</organismsDiffer>
    <experiments>5</experiments>
</comment>
<comment type="subcellular location">
    <subcellularLocation>
        <location evidence="1">Cytoplasm</location>
    </subcellularLocation>
    <subcellularLocation>
        <location evidence="1">Nucleus</location>
    </subcellularLocation>
</comment>
<comment type="induction">
    <text evidence="3">Up-regulated by salicylic acid (SA).</text>
</comment>
<comment type="similarity">
    <text evidence="4">Belongs to the glutaredoxin family. CC-type subfamily.</text>
</comment>
<feature type="chain" id="PRO_0000268716" description="Glutaredoxin-C9">
    <location>
        <begin position="1"/>
        <end position="137"/>
    </location>
</feature>
<feature type="domain" description="Glutaredoxin" evidence="2">
    <location>
        <begin position="32"/>
        <end position="136"/>
    </location>
</feature>
<feature type="short sequence motif" description="Responsive for interaction with TGA factors" evidence="1">
    <location>
        <begin position="134"/>
        <end position="137"/>
    </location>
</feature>
<feature type="disulfide bond" description="Redox-active" evidence="1">
    <location>
        <begin position="52"/>
        <end position="55"/>
    </location>
</feature>
<gene>
    <name type="primary">GRXC9</name>
    <name type="synonym">GRX480</name>
    <name type="synonym">ROXY19</name>
    <name type="ordered locus">At1g28480</name>
    <name type="ORF">F3M18.8</name>
</gene>
<organism>
    <name type="scientific">Arabidopsis thaliana</name>
    <name type="common">Mouse-ear cress</name>
    <dbReference type="NCBI Taxonomy" id="3702"/>
    <lineage>
        <taxon>Eukaryota</taxon>
        <taxon>Viridiplantae</taxon>
        <taxon>Streptophyta</taxon>
        <taxon>Embryophyta</taxon>
        <taxon>Tracheophyta</taxon>
        <taxon>Spermatophyta</taxon>
        <taxon>Magnoliopsida</taxon>
        <taxon>eudicotyledons</taxon>
        <taxon>Gunneridae</taxon>
        <taxon>Pentapetalae</taxon>
        <taxon>rosids</taxon>
        <taxon>malvids</taxon>
        <taxon>Brassicales</taxon>
        <taxon>Brassicaceae</taxon>
        <taxon>Camelineae</taxon>
        <taxon>Arabidopsis</taxon>
    </lineage>
</organism>
<protein>
    <recommendedName>
        <fullName>Glutaredoxin-C9</fullName>
        <shortName>AtGrxC9</shortName>
    </recommendedName>
    <alternativeName>
        <fullName>Protein ROXY 19</fullName>
    </alternativeName>
</protein>
<name>GRXC9_ARATH</name>
<proteinExistence type="evidence at protein level"/>